<name>FLIE_TREPA</name>
<comment type="subcellular location">
    <subcellularLocation>
        <location evidence="1">Bacterial flagellum basal body</location>
    </subcellularLocation>
</comment>
<comment type="similarity">
    <text evidence="2">Belongs to the FliE family.</text>
</comment>
<reference key="1">
    <citation type="journal article" date="1998" name="Science">
        <title>Complete genome sequence of Treponema pallidum, the syphilis spirochete.</title>
        <authorList>
            <person name="Fraser C.M."/>
            <person name="Norris S.J."/>
            <person name="Weinstock G.M."/>
            <person name="White O."/>
            <person name="Sutton G.G."/>
            <person name="Dodson R.J."/>
            <person name="Gwinn M.L."/>
            <person name="Hickey E.K."/>
            <person name="Clayton R.A."/>
            <person name="Ketchum K.A."/>
            <person name="Sodergren E."/>
            <person name="Hardham J.M."/>
            <person name="McLeod M.P."/>
            <person name="Salzberg S.L."/>
            <person name="Peterson J.D."/>
            <person name="Khalak H.G."/>
            <person name="Richardson D.L."/>
            <person name="Howell J.K."/>
            <person name="Chidambaram M."/>
            <person name="Utterback T.R."/>
            <person name="McDonald L.A."/>
            <person name="Artiach P."/>
            <person name="Bowman C."/>
            <person name="Cotton M.D."/>
            <person name="Fujii C."/>
            <person name="Garland S.A."/>
            <person name="Hatch B."/>
            <person name="Horst K."/>
            <person name="Roberts K.M."/>
            <person name="Sandusky M."/>
            <person name="Weidman J.F."/>
            <person name="Smith H.O."/>
            <person name="Venter J.C."/>
        </authorList>
    </citation>
    <scope>NUCLEOTIDE SEQUENCE [LARGE SCALE GENOMIC DNA]</scope>
    <source>
        <strain>Nichols</strain>
    </source>
</reference>
<protein>
    <recommendedName>
        <fullName>Flagellar hook-basal body complex protein FliE</fullName>
    </recommendedName>
</protein>
<organism>
    <name type="scientific">Treponema pallidum (strain Nichols)</name>
    <dbReference type="NCBI Taxonomy" id="243276"/>
    <lineage>
        <taxon>Bacteria</taxon>
        <taxon>Pseudomonadati</taxon>
        <taxon>Spirochaetota</taxon>
        <taxon>Spirochaetia</taxon>
        <taxon>Spirochaetales</taxon>
        <taxon>Treponemataceae</taxon>
        <taxon>Treponema</taxon>
    </lineage>
</organism>
<proteinExistence type="inferred from homology"/>
<sequence length="124" mass="13703">MTPVGTITNSANVYKVPSLRKVPEIGPVSVESVRQRMRGNTDAVDQAVNKKAMSFEQTLLRAFDQVNQKQQKTAELTEQMIVDPESVDVHDVTVAMAEASMSLKIAQTVIDKVLKSWNDVTTAR</sequence>
<evidence type="ECO:0000250" key="1"/>
<evidence type="ECO:0000305" key="2"/>
<gene>
    <name type="primary">fliE</name>
    <name type="ordered locus">TP_0398</name>
</gene>
<keyword id="KW-0975">Bacterial flagellum</keyword>
<keyword id="KW-1185">Reference proteome</keyword>
<dbReference type="EMBL" id="AE000520">
    <property type="protein sequence ID" value="AAC65386.1"/>
    <property type="molecule type" value="Genomic_DNA"/>
</dbReference>
<dbReference type="PIR" id="E71328">
    <property type="entry name" value="E71328"/>
</dbReference>
<dbReference type="RefSeq" id="WP_010881846.1">
    <property type="nucleotide sequence ID" value="NC_021490.2"/>
</dbReference>
<dbReference type="SMR" id="O83413"/>
<dbReference type="IntAct" id="O83413">
    <property type="interactions" value="133"/>
</dbReference>
<dbReference type="STRING" id="243276.TP_0398"/>
<dbReference type="EnsemblBacteria" id="AAC65386">
    <property type="protein sequence ID" value="AAC65386"/>
    <property type="gene ID" value="TP_0398"/>
</dbReference>
<dbReference type="GeneID" id="93876172"/>
<dbReference type="KEGG" id="tpa:TP_0398"/>
<dbReference type="KEGG" id="tpw:TPANIC_0398"/>
<dbReference type="eggNOG" id="COG1677">
    <property type="taxonomic scope" value="Bacteria"/>
</dbReference>
<dbReference type="HOGENOM" id="CLU_147249_4_1_12"/>
<dbReference type="OrthoDB" id="370409at2"/>
<dbReference type="Proteomes" id="UP000000811">
    <property type="component" value="Chromosome"/>
</dbReference>
<dbReference type="GO" id="GO:0009425">
    <property type="term" value="C:bacterial-type flagellum basal body"/>
    <property type="evidence" value="ECO:0007669"/>
    <property type="project" value="UniProtKB-SubCell"/>
</dbReference>
<dbReference type="GO" id="GO:0003774">
    <property type="term" value="F:cytoskeletal motor activity"/>
    <property type="evidence" value="ECO:0007669"/>
    <property type="project" value="InterPro"/>
</dbReference>
<dbReference type="GO" id="GO:0005198">
    <property type="term" value="F:structural molecule activity"/>
    <property type="evidence" value="ECO:0007669"/>
    <property type="project" value="InterPro"/>
</dbReference>
<dbReference type="GO" id="GO:0071973">
    <property type="term" value="P:bacterial-type flagellum-dependent cell motility"/>
    <property type="evidence" value="ECO:0007669"/>
    <property type="project" value="InterPro"/>
</dbReference>
<dbReference type="HAMAP" id="MF_00724">
    <property type="entry name" value="FliE"/>
    <property type="match status" value="1"/>
</dbReference>
<dbReference type="InterPro" id="IPR001624">
    <property type="entry name" value="FliE"/>
</dbReference>
<dbReference type="NCBIfam" id="TIGR00205">
    <property type="entry name" value="fliE"/>
    <property type="match status" value="1"/>
</dbReference>
<dbReference type="PANTHER" id="PTHR34653">
    <property type="match status" value="1"/>
</dbReference>
<dbReference type="PANTHER" id="PTHR34653:SF1">
    <property type="entry name" value="FLAGELLAR HOOK-BASAL BODY COMPLEX PROTEIN FLIE"/>
    <property type="match status" value="1"/>
</dbReference>
<dbReference type="Pfam" id="PF02049">
    <property type="entry name" value="FliE"/>
    <property type="match status" value="1"/>
</dbReference>
<dbReference type="PRINTS" id="PR01006">
    <property type="entry name" value="FLGHOOKFLIE"/>
</dbReference>
<feature type="chain" id="PRO_0000105569" description="Flagellar hook-basal body complex protein FliE">
    <location>
        <begin position="1"/>
        <end position="124"/>
    </location>
</feature>
<accession>O83413</accession>